<evidence type="ECO:0000255" key="1">
    <source>
        <dbReference type="HAMAP-Rule" id="MF_00372"/>
    </source>
</evidence>
<protein>
    <recommendedName>
        <fullName evidence="1">Imidazolonepropionase</fullName>
        <ecNumber evidence="1">3.5.2.7</ecNumber>
    </recommendedName>
    <alternativeName>
        <fullName evidence="1">Imidazolone-5-propionate hydrolase</fullName>
    </alternativeName>
</protein>
<proteinExistence type="inferred from homology"/>
<name>HUTI_PSEAB</name>
<keyword id="KW-0963">Cytoplasm</keyword>
<keyword id="KW-0369">Histidine metabolism</keyword>
<keyword id="KW-0378">Hydrolase</keyword>
<keyword id="KW-0408">Iron</keyword>
<keyword id="KW-0479">Metal-binding</keyword>
<keyword id="KW-0862">Zinc</keyword>
<organism>
    <name type="scientific">Pseudomonas aeruginosa (strain UCBPP-PA14)</name>
    <dbReference type="NCBI Taxonomy" id="208963"/>
    <lineage>
        <taxon>Bacteria</taxon>
        <taxon>Pseudomonadati</taxon>
        <taxon>Pseudomonadota</taxon>
        <taxon>Gammaproteobacteria</taxon>
        <taxon>Pseudomonadales</taxon>
        <taxon>Pseudomonadaceae</taxon>
        <taxon>Pseudomonas</taxon>
    </lineage>
</organism>
<dbReference type="EC" id="3.5.2.7" evidence="1"/>
<dbReference type="EMBL" id="CP000438">
    <property type="protein sequence ID" value="ABJ14475.1"/>
    <property type="molecule type" value="Genomic_DNA"/>
</dbReference>
<dbReference type="RefSeq" id="WP_003141827.1">
    <property type="nucleotide sequence ID" value="NZ_CP034244.1"/>
</dbReference>
<dbReference type="SMR" id="Q02ES4"/>
<dbReference type="MEROPS" id="M38.980"/>
<dbReference type="KEGG" id="pau:PA14_67250"/>
<dbReference type="PseudoCAP" id="PA14_67250"/>
<dbReference type="HOGENOM" id="CLU_041647_0_0_6"/>
<dbReference type="BioCyc" id="PAER208963:G1G74-5674-MONOMER"/>
<dbReference type="UniPathway" id="UPA00379">
    <property type="reaction ID" value="UER00551"/>
</dbReference>
<dbReference type="Proteomes" id="UP000000653">
    <property type="component" value="Chromosome"/>
</dbReference>
<dbReference type="GO" id="GO:0005737">
    <property type="term" value="C:cytoplasm"/>
    <property type="evidence" value="ECO:0007669"/>
    <property type="project" value="UniProtKB-SubCell"/>
</dbReference>
<dbReference type="GO" id="GO:0050480">
    <property type="term" value="F:imidazolonepropionase activity"/>
    <property type="evidence" value="ECO:0007669"/>
    <property type="project" value="UniProtKB-UniRule"/>
</dbReference>
<dbReference type="GO" id="GO:0005506">
    <property type="term" value="F:iron ion binding"/>
    <property type="evidence" value="ECO:0007669"/>
    <property type="project" value="UniProtKB-UniRule"/>
</dbReference>
<dbReference type="GO" id="GO:0008270">
    <property type="term" value="F:zinc ion binding"/>
    <property type="evidence" value="ECO:0007669"/>
    <property type="project" value="UniProtKB-UniRule"/>
</dbReference>
<dbReference type="GO" id="GO:0019556">
    <property type="term" value="P:L-histidine catabolic process to glutamate and formamide"/>
    <property type="evidence" value="ECO:0007669"/>
    <property type="project" value="UniProtKB-UniPathway"/>
</dbReference>
<dbReference type="GO" id="GO:0019557">
    <property type="term" value="P:L-histidine catabolic process to glutamate and formate"/>
    <property type="evidence" value="ECO:0007669"/>
    <property type="project" value="UniProtKB-UniPathway"/>
</dbReference>
<dbReference type="CDD" id="cd01296">
    <property type="entry name" value="Imidazolone-5PH"/>
    <property type="match status" value="1"/>
</dbReference>
<dbReference type="FunFam" id="3.20.20.140:FF:000007">
    <property type="entry name" value="Imidazolonepropionase"/>
    <property type="match status" value="1"/>
</dbReference>
<dbReference type="Gene3D" id="3.20.20.140">
    <property type="entry name" value="Metal-dependent hydrolases"/>
    <property type="match status" value="1"/>
</dbReference>
<dbReference type="Gene3D" id="2.30.40.10">
    <property type="entry name" value="Urease, subunit C, domain 1"/>
    <property type="match status" value="1"/>
</dbReference>
<dbReference type="HAMAP" id="MF_00372">
    <property type="entry name" value="HutI"/>
    <property type="match status" value="1"/>
</dbReference>
<dbReference type="InterPro" id="IPR006680">
    <property type="entry name" value="Amidohydro-rel"/>
</dbReference>
<dbReference type="InterPro" id="IPR005920">
    <property type="entry name" value="HutI"/>
</dbReference>
<dbReference type="InterPro" id="IPR011059">
    <property type="entry name" value="Metal-dep_hydrolase_composite"/>
</dbReference>
<dbReference type="InterPro" id="IPR032466">
    <property type="entry name" value="Metal_Hydrolase"/>
</dbReference>
<dbReference type="NCBIfam" id="TIGR01224">
    <property type="entry name" value="hutI"/>
    <property type="match status" value="1"/>
</dbReference>
<dbReference type="PANTHER" id="PTHR42752">
    <property type="entry name" value="IMIDAZOLONEPROPIONASE"/>
    <property type="match status" value="1"/>
</dbReference>
<dbReference type="PANTHER" id="PTHR42752:SF1">
    <property type="entry name" value="IMIDAZOLONEPROPIONASE-RELATED"/>
    <property type="match status" value="1"/>
</dbReference>
<dbReference type="Pfam" id="PF01979">
    <property type="entry name" value="Amidohydro_1"/>
    <property type="match status" value="1"/>
</dbReference>
<dbReference type="SUPFAM" id="SSF51338">
    <property type="entry name" value="Composite domain of metallo-dependent hydrolases"/>
    <property type="match status" value="1"/>
</dbReference>
<dbReference type="SUPFAM" id="SSF51556">
    <property type="entry name" value="Metallo-dependent hydrolases"/>
    <property type="match status" value="1"/>
</dbReference>
<comment type="function">
    <text evidence="1">Catalyzes the hydrolytic cleavage of the carbon-nitrogen bond in imidazolone-5-propanoate to yield N-formimidoyl-L-glutamate. It is the third step in the universal histidine degradation pathway.</text>
</comment>
<comment type="catalytic activity">
    <reaction evidence="1">
        <text>4-imidazolone-5-propanoate + H2O = N-formimidoyl-L-glutamate</text>
        <dbReference type="Rhea" id="RHEA:23660"/>
        <dbReference type="ChEBI" id="CHEBI:15377"/>
        <dbReference type="ChEBI" id="CHEBI:58928"/>
        <dbReference type="ChEBI" id="CHEBI:77893"/>
        <dbReference type="EC" id="3.5.2.7"/>
    </reaction>
</comment>
<comment type="cofactor">
    <cofactor evidence="1">
        <name>Zn(2+)</name>
        <dbReference type="ChEBI" id="CHEBI:29105"/>
    </cofactor>
    <cofactor evidence="1">
        <name>Fe(3+)</name>
        <dbReference type="ChEBI" id="CHEBI:29034"/>
    </cofactor>
    <text evidence="1">Binds 1 zinc or iron ion per subunit.</text>
</comment>
<comment type="pathway">
    <text evidence="1">Amino-acid degradation; L-histidine degradation into L-glutamate; N-formimidoyl-L-glutamate from L-histidine: step 3/3.</text>
</comment>
<comment type="subcellular location">
    <subcellularLocation>
        <location evidence="1">Cytoplasm</location>
    </subcellularLocation>
</comment>
<comment type="similarity">
    <text evidence="1">Belongs to the metallo-dependent hydrolases superfamily. HutI family.</text>
</comment>
<accession>Q02ES4</accession>
<gene>
    <name evidence="1" type="primary">hutI</name>
    <name type="ordered locus">PA14_67250</name>
</gene>
<sequence>MKRLWQHCHAATLKGGKYSIVEDAALVTDGPLIHWIGPRAELPPDDYAERIDLDGAWLTPGLIDCHTHAVFGGNRSGEFEQRLEGVSYAEIAAAGGGIASTVRATREASEEELLASARKRLDPLLRDGVTALEIKSGYGLDLASERKMLRVIRRLGERLPATVRSTCLAAHALPPEYAGRADDYIEHICSTMLPALAGEGLVDAVDAFCEHLAFSPAQVERVFIAARELGLPVKLHAEQLSSLHGSSLAARYRALSADHLEYMTEDDARSMGEAGTVAVLLPGAFYLLRETQLPPIDALRRHGVAMAIASDLNPGTSPALSLRLMLNMACTLFRLTPEEALAGVTLHAARALGLEARHGSLEVGKLADFVAWDIERPAELAYWLGGDLPKRVIRHAEEVYRG</sequence>
<reference key="1">
    <citation type="journal article" date="2006" name="Genome Biol.">
        <title>Genomic analysis reveals that Pseudomonas aeruginosa virulence is combinatorial.</title>
        <authorList>
            <person name="Lee D.G."/>
            <person name="Urbach J.M."/>
            <person name="Wu G."/>
            <person name="Liberati N.T."/>
            <person name="Feinbaum R.L."/>
            <person name="Miyata S."/>
            <person name="Diggins L.T."/>
            <person name="He J."/>
            <person name="Saucier M."/>
            <person name="Deziel E."/>
            <person name="Friedman L."/>
            <person name="Li L."/>
            <person name="Grills G."/>
            <person name="Montgomery K."/>
            <person name="Kucherlapati R."/>
            <person name="Rahme L.G."/>
            <person name="Ausubel F.M."/>
        </authorList>
    </citation>
    <scope>NUCLEOTIDE SEQUENCE [LARGE SCALE GENOMIC DNA]</scope>
    <source>
        <strain>UCBPP-PA14</strain>
    </source>
</reference>
<feature type="chain" id="PRO_0000306486" description="Imidazolonepropionase">
    <location>
        <begin position="1"/>
        <end position="402"/>
    </location>
</feature>
<feature type="binding site" evidence="1">
    <location>
        <position position="66"/>
    </location>
    <ligand>
        <name>Fe(3+)</name>
        <dbReference type="ChEBI" id="CHEBI:29034"/>
    </ligand>
</feature>
<feature type="binding site" evidence="1">
    <location>
        <position position="66"/>
    </location>
    <ligand>
        <name>Zn(2+)</name>
        <dbReference type="ChEBI" id="CHEBI:29105"/>
    </ligand>
</feature>
<feature type="binding site" evidence="1">
    <location>
        <position position="68"/>
    </location>
    <ligand>
        <name>Fe(3+)</name>
        <dbReference type="ChEBI" id="CHEBI:29034"/>
    </ligand>
</feature>
<feature type="binding site" evidence="1">
    <location>
        <position position="68"/>
    </location>
    <ligand>
        <name>Zn(2+)</name>
        <dbReference type="ChEBI" id="CHEBI:29105"/>
    </ligand>
</feature>
<feature type="binding site" evidence="1">
    <location>
        <position position="75"/>
    </location>
    <ligand>
        <name>4-imidazolone-5-propanoate</name>
        <dbReference type="ChEBI" id="CHEBI:77893"/>
    </ligand>
</feature>
<feature type="binding site" evidence="1">
    <location>
        <position position="138"/>
    </location>
    <ligand>
        <name>4-imidazolone-5-propanoate</name>
        <dbReference type="ChEBI" id="CHEBI:77893"/>
    </ligand>
</feature>
<feature type="binding site" evidence="1">
    <location>
        <position position="138"/>
    </location>
    <ligand>
        <name>N-formimidoyl-L-glutamate</name>
        <dbReference type="ChEBI" id="CHEBI:58928"/>
    </ligand>
</feature>
<feature type="binding site" evidence="1">
    <location>
        <position position="171"/>
    </location>
    <ligand>
        <name>4-imidazolone-5-propanoate</name>
        <dbReference type="ChEBI" id="CHEBI:77893"/>
    </ligand>
</feature>
<feature type="binding site" evidence="1">
    <location>
        <position position="236"/>
    </location>
    <ligand>
        <name>Fe(3+)</name>
        <dbReference type="ChEBI" id="CHEBI:29034"/>
    </ligand>
</feature>
<feature type="binding site" evidence="1">
    <location>
        <position position="236"/>
    </location>
    <ligand>
        <name>Zn(2+)</name>
        <dbReference type="ChEBI" id="CHEBI:29105"/>
    </ligand>
</feature>
<feature type="binding site" evidence="1">
    <location>
        <position position="239"/>
    </location>
    <ligand>
        <name>4-imidazolone-5-propanoate</name>
        <dbReference type="ChEBI" id="CHEBI:77893"/>
    </ligand>
</feature>
<feature type="binding site" evidence="1">
    <location>
        <position position="311"/>
    </location>
    <ligand>
        <name>Fe(3+)</name>
        <dbReference type="ChEBI" id="CHEBI:29034"/>
    </ligand>
</feature>
<feature type="binding site" evidence="1">
    <location>
        <position position="311"/>
    </location>
    <ligand>
        <name>Zn(2+)</name>
        <dbReference type="ChEBI" id="CHEBI:29105"/>
    </ligand>
</feature>
<feature type="binding site" evidence="1">
    <location>
        <position position="313"/>
    </location>
    <ligand>
        <name>N-formimidoyl-L-glutamate</name>
        <dbReference type="ChEBI" id="CHEBI:58928"/>
    </ligand>
</feature>
<feature type="binding site" evidence="1">
    <location>
        <position position="315"/>
    </location>
    <ligand>
        <name>N-formimidoyl-L-glutamate</name>
        <dbReference type="ChEBI" id="CHEBI:58928"/>
    </ligand>
</feature>
<feature type="binding site" evidence="1">
    <location>
        <position position="316"/>
    </location>
    <ligand>
        <name>4-imidazolone-5-propanoate</name>
        <dbReference type="ChEBI" id="CHEBI:77893"/>
    </ligand>
</feature>